<organism>
    <name type="scientific">Escherichia coli O45:K1 (strain S88 / ExPEC)</name>
    <dbReference type="NCBI Taxonomy" id="585035"/>
    <lineage>
        <taxon>Bacteria</taxon>
        <taxon>Pseudomonadati</taxon>
        <taxon>Pseudomonadota</taxon>
        <taxon>Gammaproteobacteria</taxon>
        <taxon>Enterobacterales</taxon>
        <taxon>Enterobacteriaceae</taxon>
        <taxon>Escherichia</taxon>
    </lineage>
</organism>
<feature type="chain" id="PRO_0000403020" description="FMN reductase (NADH) RutF">
    <location>
        <begin position="1"/>
        <end position="164"/>
    </location>
</feature>
<dbReference type="EC" id="1.5.1.42" evidence="1"/>
<dbReference type="EMBL" id="CU928161">
    <property type="protein sequence ID" value="CAR02354.1"/>
    <property type="molecule type" value="Genomic_DNA"/>
</dbReference>
<dbReference type="RefSeq" id="WP_001028100.1">
    <property type="nucleotide sequence ID" value="NC_011742.1"/>
</dbReference>
<dbReference type="SMR" id="B7MIF4"/>
<dbReference type="KEGG" id="ecz:ECS88_1023"/>
<dbReference type="HOGENOM" id="CLU_059021_2_2_6"/>
<dbReference type="Proteomes" id="UP000000747">
    <property type="component" value="Chromosome"/>
</dbReference>
<dbReference type="GO" id="GO:0010181">
    <property type="term" value="F:FMN binding"/>
    <property type="evidence" value="ECO:0007669"/>
    <property type="project" value="InterPro"/>
</dbReference>
<dbReference type="GO" id="GO:0052874">
    <property type="term" value="F:FMN reductase (NADH) activity"/>
    <property type="evidence" value="ECO:0007669"/>
    <property type="project" value="UniProtKB-EC"/>
</dbReference>
<dbReference type="GO" id="GO:0008752">
    <property type="term" value="F:FMN reductase [NAD(P)H] activity"/>
    <property type="evidence" value="ECO:0007669"/>
    <property type="project" value="InterPro"/>
</dbReference>
<dbReference type="GO" id="GO:0042602">
    <property type="term" value="F:riboflavin reductase (NADPH) activity"/>
    <property type="evidence" value="ECO:0007669"/>
    <property type="project" value="UniProtKB-UniRule"/>
</dbReference>
<dbReference type="GO" id="GO:0019740">
    <property type="term" value="P:nitrogen utilization"/>
    <property type="evidence" value="ECO:0007669"/>
    <property type="project" value="UniProtKB-UniRule"/>
</dbReference>
<dbReference type="GO" id="GO:0006212">
    <property type="term" value="P:uracil catabolic process"/>
    <property type="evidence" value="ECO:0007669"/>
    <property type="project" value="UniProtKB-UniRule"/>
</dbReference>
<dbReference type="FunFam" id="2.30.110.10:FF:000002">
    <property type="entry name" value="FMN reductase (NADH) RutF"/>
    <property type="match status" value="1"/>
</dbReference>
<dbReference type="Gene3D" id="2.30.110.10">
    <property type="entry name" value="Electron Transport, Fmn-binding Protein, Chain A"/>
    <property type="match status" value="1"/>
</dbReference>
<dbReference type="HAMAP" id="MF_00833">
    <property type="entry name" value="RutF"/>
    <property type="match status" value="1"/>
</dbReference>
<dbReference type="InterPro" id="IPR002563">
    <property type="entry name" value="Flavin_Rdtase-like_dom"/>
</dbReference>
<dbReference type="InterPro" id="IPR050268">
    <property type="entry name" value="NADH-dep_flavin_reductase"/>
</dbReference>
<dbReference type="InterPro" id="IPR019917">
    <property type="entry name" value="RutF"/>
</dbReference>
<dbReference type="InterPro" id="IPR012349">
    <property type="entry name" value="Split_barrel_FMN-bd"/>
</dbReference>
<dbReference type="NCBIfam" id="TIGR03615">
    <property type="entry name" value="RutF"/>
    <property type="match status" value="1"/>
</dbReference>
<dbReference type="PANTHER" id="PTHR30466">
    <property type="entry name" value="FLAVIN REDUCTASE"/>
    <property type="match status" value="1"/>
</dbReference>
<dbReference type="PANTHER" id="PTHR30466:SF1">
    <property type="entry name" value="FMN REDUCTASE (NADH) RUTF"/>
    <property type="match status" value="1"/>
</dbReference>
<dbReference type="Pfam" id="PF01613">
    <property type="entry name" value="Flavin_Reduct"/>
    <property type="match status" value="1"/>
</dbReference>
<dbReference type="SMART" id="SM00903">
    <property type="entry name" value="Flavin_Reduct"/>
    <property type="match status" value="1"/>
</dbReference>
<dbReference type="SUPFAM" id="SSF50475">
    <property type="entry name" value="FMN-binding split barrel"/>
    <property type="match status" value="1"/>
</dbReference>
<gene>
    <name evidence="1" type="primary">rutF</name>
    <name type="ordered locus">ECS88_1023</name>
</gene>
<accession>B7MIF4</accession>
<sequence>MNIVDQQTFRDAMSCMGAAVNIITTDGPAGRAGFTASAVCSVTDTPPTLLVCLNRGASVWPVFNENRTLCVNTLSAGQEPLSNLFGGKTPMELRFAAARWQTGVTGCPQLEEALVSFDCRISQVVSVGTHDILFCAIEAIHRHATPYGLVWFDRSYHALMRPAC</sequence>
<name>RUTF_ECO45</name>
<protein>
    <recommendedName>
        <fullName evidence="1">FMN reductase (NADH) RutF</fullName>
        <ecNumber evidence="1">1.5.1.42</ecNumber>
    </recommendedName>
    <alternativeName>
        <fullName evidence="1">FMN reductase</fullName>
    </alternativeName>
    <alternativeName>
        <fullName evidence="1">NADH-flavin reductase RutF</fullName>
    </alternativeName>
    <alternativeName>
        <fullName evidence="1">NADH:flavin oxidoreductase</fullName>
    </alternativeName>
</protein>
<proteinExistence type="inferred from homology"/>
<comment type="function">
    <text evidence="1">Catalyzes the reduction of FMN to FMNH2 which is used to reduce pyrimidine by RutA via the Rut pathway.</text>
</comment>
<comment type="catalytic activity">
    <reaction evidence="1">
        <text>FMNH2 + NAD(+) = FMN + NADH + 2 H(+)</text>
        <dbReference type="Rhea" id="RHEA:21620"/>
        <dbReference type="ChEBI" id="CHEBI:15378"/>
        <dbReference type="ChEBI" id="CHEBI:57540"/>
        <dbReference type="ChEBI" id="CHEBI:57618"/>
        <dbReference type="ChEBI" id="CHEBI:57945"/>
        <dbReference type="ChEBI" id="CHEBI:58210"/>
        <dbReference type="EC" id="1.5.1.42"/>
    </reaction>
</comment>
<comment type="induction">
    <text evidence="1">Up-regulated by the nitrogen regulatory protein C (NtrC also called GlnG) and repressed by RutR.</text>
</comment>
<comment type="similarity">
    <text evidence="1">Belongs to the non-flavoprotein flavin reductase family. RutF subfamily.</text>
</comment>
<evidence type="ECO:0000255" key="1">
    <source>
        <dbReference type="HAMAP-Rule" id="MF_00833"/>
    </source>
</evidence>
<reference key="1">
    <citation type="journal article" date="2009" name="PLoS Genet.">
        <title>Organised genome dynamics in the Escherichia coli species results in highly diverse adaptive paths.</title>
        <authorList>
            <person name="Touchon M."/>
            <person name="Hoede C."/>
            <person name="Tenaillon O."/>
            <person name="Barbe V."/>
            <person name="Baeriswyl S."/>
            <person name="Bidet P."/>
            <person name="Bingen E."/>
            <person name="Bonacorsi S."/>
            <person name="Bouchier C."/>
            <person name="Bouvet O."/>
            <person name="Calteau A."/>
            <person name="Chiapello H."/>
            <person name="Clermont O."/>
            <person name="Cruveiller S."/>
            <person name="Danchin A."/>
            <person name="Diard M."/>
            <person name="Dossat C."/>
            <person name="Karoui M.E."/>
            <person name="Frapy E."/>
            <person name="Garry L."/>
            <person name="Ghigo J.M."/>
            <person name="Gilles A.M."/>
            <person name="Johnson J."/>
            <person name="Le Bouguenec C."/>
            <person name="Lescat M."/>
            <person name="Mangenot S."/>
            <person name="Martinez-Jehanne V."/>
            <person name="Matic I."/>
            <person name="Nassif X."/>
            <person name="Oztas S."/>
            <person name="Petit M.A."/>
            <person name="Pichon C."/>
            <person name="Rouy Z."/>
            <person name="Ruf C.S."/>
            <person name="Schneider D."/>
            <person name="Tourret J."/>
            <person name="Vacherie B."/>
            <person name="Vallenet D."/>
            <person name="Medigue C."/>
            <person name="Rocha E.P.C."/>
            <person name="Denamur E."/>
        </authorList>
    </citation>
    <scope>NUCLEOTIDE SEQUENCE [LARGE SCALE GENOMIC DNA]</scope>
    <source>
        <strain>S88 / ExPEC</strain>
    </source>
</reference>
<keyword id="KW-0285">Flavoprotein</keyword>
<keyword id="KW-0288">FMN</keyword>
<keyword id="KW-0520">NAD</keyword>
<keyword id="KW-0560">Oxidoreductase</keyword>
<keyword id="KW-1185">Reference proteome</keyword>